<accession>A7H443</accession>
<feature type="chain" id="PRO_1000124019" description="4-hydroxy-tetrahydrodipicolinate synthase">
    <location>
        <begin position="1"/>
        <end position="298"/>
    </location>
</feature>
<feature type="active site" description="Proton donor/acceptor" evidence="1">
    <location>
        <position position="137"/>
    </location>
</feature>
<feature type="active site" description="Schiff-base intermediate with substrate" evidence="1">
    <location>
        <position position="166"/>
    </location>
</feature>
<feature type="binding site" evidence="1">
    <location>
        <position position="48"/>
    </location>
    <ligand>
        <name>pyruvate</name>
        <dbReference type="ChEBI" id="CHEBI:15361"/>
    </ligand>
</feature>
<feature type="binding site" evidence="1">
    <location>
        <position position="207"/>
    </location>
    <ligand>
        <name>pyruvate</name>
        <dbReference type="ChEBI" id="CHEBI:15361"/>
    </ligand>
</feature>
<feature type="site" description="Part of a proton relay during catalysis" evidence="1">
    <location>
        <position position="47"/>
    </location>
</feature>
<feature type="site" description="Part of a proton relay during catalysis" evidence="1">
    <location>
        <position position="111"/>
    </location>
</feature>
<organism>
    <name type="scientific">Campylobacter jejuni subsp. doylei (strain ATCC BAA-1458 / RM4099 / 269.97)</name>
    <dbReference type="NCBI Taxonomy" id="360109"/>
    <lineage>
        <taxon>Bacteria</taxon>
        <taxon>Pseudomonadati</taxon>
        <taxon>Campylobacterota</taxon>
        <taxon>Epsilonproteobacteria</taxon>
        <taxon>Campylobacterales</taxon>
        <taxon>Campylobacteraceae</taxon>
        <taxon>Campylobacter</taxon>
    </lineage>
</organism>
<comment type="function">
    <text evidence="1">Catalyzes the condensation of (S)-aspartate-beta-semialdehyde [(S)-ASA] and pyruvate to 4-hydroxy-tetrahydrodipicolinate (HTPA).</text>
</comment>
<comment type="catalytic activity">
    <reaction evidence="1">
        <text>L-aspartate 4-semialdehyde + pyruvate = (2S,4S)-4-hydroxy-2,3,4,5-tetrahydrodipicolinate + H2O + H(+)</text>
        <dbReference type="Rhea" id="RHEA:34171"/>
        <dbReference type="ChEBI" id="CHEBI:15361"/>
        <dbReference type="ChEBI" id="CHEBI:15377"/>
        <dbReference type="ChEBI" id="CHEBI:15378"/>
        <dbReference type="ChEBI" id="CHEBI:67139"/>
        <dbReference type="ChEBI" id="CHEBI:537519"/>
        <dbReference type="EC" id="4.3.3.7"/>
    </reaction>
</comment>
<comment type="pathway">
    <text evidence="1">Amino-acid biosynthesis; L-lysine biosynthesis via DAP pathway; (S)-tetrahydrodipicolinate from L-aspartate: step 3/4.</text>
</comment>
<comment type="subunit">
    <text evidence="1">Homotetramer; dimer of dimers.</text>
</comment>
<comment type="subcellular location">
    <subcellularLocation>
        <location evidence="1">Cytoplasm</location>
    </subcellularLocation>
</comment>
<comment type="similarity">
    <text evidence="1">Belongs to the DapA family.</text>
</comment>
<comment type="caution">
    <text evidence="2">Was originally thought to be a dihydrodipicolinate synthase (DHDPS), catalyzing the condensation of (S)-aspartate-beta-semialdehyde [(S)-ASA] and pyruvate to dihydrodipicolinate (DHDP). However, it was shown in E.coli that the product of the enzymatic reaction is not dihydrodipicolinate but in fact (4S)-4-hydroxy-2,3,4,5-tetrahydro-(2S)-dipicolinic acid (HTPA), and that the consecutive dehydration reaction leading to DHDP is not spontaneous but catalyzed by DapB.</text>
</comment>
<protein>
    <recommendedName>
        <fullName evidence="1">4-hydroxy-tetrahydrodipicolinate synthase</fullName>
        <shortName evidence="1">HTPA synthase</shortName>
        <ecNumber evidence="1">4.3.3.7</ecNumber>
    </recommendedName>
</protein>
<sequence>MDKNIIIGAMTALITPFKNGKVDEQSYARLIKRQIENGIDAVVPAGTTGESATLTHEEHRTCIEIAVEICKGTKVKVLAGAGSNATHEAVDLAKFAKEHGADGILSVAPYYNKPTQQGLYEHYKAIAQSVDTPVLLYNVPGRTGCEISTDTIIKLFRDCENIYGVKEASGNIDKCVDLLAHEPRMMLISGEDAINYPILSNGGKGVISVTSNLLPDMISALTHFALDENYKEAKKINDELYNINKILFCESNPIPIKTAMYIAGLIESLEFRLPLCSPSKENFAKIEEVMKKYKIKGF</sequence>
<name>DAPA_CAMJD</name>
<dbReference type="EC" id="4.3.3.7" evidence="1"/>
<dbReference type="EMBL" id="CP000768">
    <property type="protein sequence ID" value="ABS44238.1"/>
    <property type="molecule type" value="Genomic_DNA"/>
</dbReference>
<dbReference type="SMR" id="A7H443"/>
<dbReference type="KEGG" id="cjd:JJD26997_1204"/>
<dbReference type="HOGENOM" id="CLU_049343_7_0_7"/>
<dbReference type="UniPathway" id="UPA00034">
    <property type="reaction ID" value="UER00017"/>
</dbReference>
<dbReference type="Proteomes" id="UP000002302">
    <property type="component" value="Chromosome"/>
</dbReference>
<dbReference type="GO" id="GO:0005829">
    <property type="term" value="C:cytosol"/>
    <property type="evidence" value="ECO:0007669"/>
    <property type="project" value="TreeGrafter"/>
</dbReference>
<dbReference type="GO" id="GO:0008840">
    <property type="term" value="F:4-hydroxy-tetrahydrodipicolinate synthase activity"/>
    <property type="evidence" value="ECO:0007669"/>
    <property type="project" value="UniProtKB-UniRule"/>
</dbReference>
<dbReference type="GO" id="GO:0019877">
    <property type="term" value="P:diaminopimelate biosynthetic process"/>
    <property type="evidence" value="ECO:0007669"/>
    <property type="project" value="UniProtKB-UniRule"/>
</dbReference>
<dbReference type="GO" id="GO:0009089">
    <property type="term" value="P:lysine biosynthetic process via diaminopimelate"/>
    <property type="evidence" value="ECO:0007669"/>
    <property type="project" value="UniProtKB-UniRule"/>
</dbReference>
<dbReference type="CDD" id="cd00950">
    <property type="entry name" value="DHDPS"/>
    <property type="match status" value="1"/>
</dbReference>
<dbReference type="Gene3D" id="3.20.20.70">
    <property type="entry name" value="Aldolase class I"/>
    <property type="match status" value="1"/>
</dbReference>
<dbReference type="HAMAP" id="MF_00418">
    <property type="entry name" value="DapA"/>
    <property type="match status" value="1"/>
</dbReference>
<dbReference type="InterPro" id="IPR013785">
    <property type="entry name" value="Aldolase_TIM"/>
</dbReference>
<dbReference type="InterPro" id="IPR005263">
    <property type="entry name" value="DapA"/>
</dbReference>
<dbReference type="InterPro" id="IPR002220">
    <property type="entry name" value="DapA-like"/>
</dbReference>
<dbReference type="InterPro" id="IPR020625">
    <property type="entry name" value="Schiff_base-form_aldolases_AS"/>
</dbReference>
<dbReference type="InterPro" id="IPR020624">
    <property type="entry name" value="Schiff_base-form_aldolases_CS"/>
</dbReference>
<dbReference type="NCBIfam" id="TIGR00674">
    <property type="entry name" value="dapA"/>
    <property type="match status" value="1"/>
</dbReference>
<dbReference type="PANTHER" id="PTHR12128:SF66">
    <property type="entry name" value="4-HYDROXY-2-OXOGLUTARATE ALDOLASE, MITOCHONDRIAL"/>
    <property type="match status" value="1"/>
</dbReference>
<dbReference type="PANTHER" id="PTHR12128">
    <property type="entry name" value="DIHYDRODIPICOLINATE SYNTHASE"/>
    <property type="match status" value="1"/>
</dbReference>
<dbReference type="Pfam" id="PF00701">
    <property type="entry name" value="DHDPS"/>
    <property type="match status" value="1"/>
</dbReference>
<dbReference type="PIRSF" id="PIRSF001365">
    <property type="entry name" value="DHDPS"/>
    <property type="match status" value="1"/>
</dbReference>
<dbReference type="PRINTS" id="PR00146">
    <property type="entry name" value="DHPICSNTHASE"/>
</dbReference>
<dbReference type="SMART" id="SM01130">
    <property type="entry name" value="DHDPS"/>
    <property type="match status" value="1"/>
</dbReference>
<dbReference type="SUPFAM" id="SSF51569">
    <property type="entry name" value="Aldolase"/>
    <property type="match status" value="1"/>
</dbReference>
<dbReference type="PROSITE" id="PS00665">
    <property type="entry name" value="DHDPS_1"/>
    <property type="match status" value="1"/>
</dbReference>
<dbReference type="PROSITE" id="PS00666">
    <property type="entry name" value="DHDPS_2"/>
    <property type="match status" value="1"/>
</dbReference>
<keyword id="KW-0028">Amino-acid biosynthesis</keyword>
<keyword id="KW-0963">Cytoplasm</keyword>
<keyword id="KW-0220">Diaminopimelate biosynthesis</keyword>
<keyword id="KW-0456">Lyase</keyword>
<keyword id="KW-0457">Lysine biosynthesis</keyword>
<keyword id="KW-0704">Schiff base</keyword>
<proteinExistence type="inferred from homology"/>
<gene>
    <name evidence="1" type="primary">dapA</name>
    <name type="ordered locus">JJD26997_1204</name>
</gene>
<evidence type="ECO:0000255" key="1">
    <source>
        <dbReference type="HAMAP-Rule" id="MF_00418"/>
    </source>
</evidence>
<evidence type="ECO:0000305" key="2"/>
<reference key="1">
    <citation type="submission" date="2007-07" db="EMBL/GenBank/DDBJ databases">
        <title>Complete genome sequence of Campylobacter jejuni subsp doylei 269.97 isolated from human blood.</title>
        <authorList>
            <person name="Fouts D.E."/>
            <person name="Mongodin E.F."/>
            <person name="Puiu D."/>
            <person name="Sebastian Y."/>
            <person name="Miller W.G."/>
            <person name="Mandrell R.E."/>
            <person name="Lastovica A.J."/>
            <person name="Nelson K.E."/>
        </authorList>
    </citation>
    <scope>NUCLEOTIDE SEQUENCE [LARGE SCALE GENOMIC DNA]</scope>
    <source>
        <strain>ATCC BAA-1458 / RM4099 / 269.97</strain>
    </source>
</reference>